<feature type="chain" id="PRO_1000144921" description="Iron-sulfur cluster insertion protein ErpA">
    <location>
        <begin position="1"/>
        <end position="114"/>
    </location>
</feature>
<feature type="binding site" evidence="1">
    <location>
        <position position="42"/>
    </location>
    <ligand>
        <name>iron-sulfur cluster</name>
        <dbReference type="ChEBI" id="CHEBI:30408"/>
    </ligand>
</feature>
<feature type="binding site" evidence="1">
    <location>
        <position position="106"/>
    </location>
    <ligand>
        <name>iron-sulfur cluster</name>
        <dbReference type="ChEBI" id="CHEBI:30408"/>
    </ligand>
</feature>
<feature type="binding site" evidence="1">
    <location>
        <position position="108"/>
    </location>
    <ligand>
        <name>iron-sulfur cluster</name>
        <dbReference type="ChEBI" id="CHEBI:30408"/>
    </ligand>
</feature>
<proteinExistence type="inferred from homology"/>
<evidence type="ECO:0000255" key="1">
    <source>
        <dbReference type="HAMAP-Rule" id="MF_01380"/>
    </source>
</evidence>
<protein>
    <recommendedName>
        <fullName evidence="1">Iron-sulfur cluster insertion protein ErpA</fullName>
    </recommendedName>
</protein>
<name>ERPA_KLEP3</name>
<dbReference type="EMBL" id="CP000964">
    <property type="protein sequence ID" value="ACI09425.1"/>
    <property type="molecule type" value="Genomic_DNA"/>
</dbReference>
<dbReference type="SMR" id="B5Y1L3"/>
<dbReference type="KEGG" id="kpe:KPK_4562"/>
<dbReference type="HOGENOM" id="CLU_069054_5_3_6"/>
<dbReference type="Proteomes" id="UP000001734">
    <property type="component" value="Chromosome"/>
</dbReference>
<dbReference type="GO" id="GO:0005829">
    <property type="term" value="C:cytosol"/>
    <property type="evidence" value="ECO:0007669"/>
    <property type="project" value="TreeGrafter"/>
</dbReference>
<dbReference type="GO" id="GO:0051537">
    <property type="term" value="F:2 iron, 2 sulfur cluster binding"/>
    <property type="evidence" value="ECO:0007669"/>
    <property type="project" value="TreeGrafter"/>
</dbReference>
<dbReference type="GO" id="GO:0051539">
    <property type="term" value="F:4 iron, 4 sulfur cluster binding"/>
    <property type="evidence" value="ECO:0007669"/>
    <property type="project" value="TreeGrafter"/>
</dbReference>
<dbReference type="GO" id="GO:0005506">
    <property type="term" value="F:iron ion binding"/>
    <property type="evidence" value="ECO:0007669"/>
    <property type="project" value="UniProtKB-UniRule"/>
</dbReference>
<dbReference type="GO" id="GO:0016226">
    <property type="term" value="P:iron-sulfur cluster assembly"/>
    <property type="evidence" value="ECO:0007669"/>
    <property type="project" value="UniProtKB-UniRule"/>
</dbReference>
<dbReference type="FunFam" id="2.60.300.12:FF:000002">
    <property type="entry name" value="Iron-sulfur cluster insertion protein ErpA"/>
    <property type="match status" value="1"/>
</dbReference>
<dbReference type="Gene3D" id="2.60.300.12">
    <property type="entry name" value="HesB-like domain"/>
    <property type="match status" value="1"/>
</dbReference>
<dbReference type="HAMAP" id="MF_01380">
    <property type="entry name" value="Fe_S_insert_ErpA"/>
    <property type="match status" value="1"/>
</dbReference>
<dbReference type="InterPro" id="IPR000361">
    <property type="entry name" value="FeS_biogenesis"/>
</dbReference>
<dbReference type="InterPro" id="IPR016092">
    <property type="entry name" value="FeS_cluster_insertion"/>
</dbReference>
<dbReference type="InterPro" id="IPR017870">
    <property type="entry name" value="FeS_cluster_insertion_CS"/>
</dbReference>
<dbReference type="InterPro" id="IPR023063">
    <property type="entry name" value="FeS_cluster_insertion_RrpA"/>
</dbReference>
<dbReference type="InterPro" id="IPR035903">
    <property type="entry name" value="HesB-like_dom_sf"/>
</dbReference>
<dbReference type="NCBIfam" id="TIGR00049">
    <property type="entry name" value="iron-sulfur cluster assembly accessory protein"/>
    <property type="match status" value="1"/>
</dbReference>
<dbReference type="NCBIfam" id="NF010147">
    <property type="entry name" value="PRK13623.1"/>
    <property type="match status" value="1"/>
</dbReference>
<dbReference type="PANTHER" id="PTHR43011">
    <property type="entry name" value="IRON-SULFUR CLUSTER ASSEMBLY 2 HOMOLOG, MITOCHONDRIAL"/>
    <property type="match status" value="1"/>
</dbReference>
<dbReference type="PANTHER" id="PTHR43011:SF1">
    <property type="entry name" value="IRON-SULFUR CLUSTER ASSEMBLY 2 HOMOLOG, MITOCHONDRIAL"/>
    <property type="match status" value="1"/>
</dbReference>
<dbReference type="Pfam" id="PF01521">
    <property type="entry name" value="Fe-S_biosyn"/>
    <property type="match status" value="1"/>
</dbReference>
<dbReference type="SUPFAM" id="SSF89360">
    <property type="entry name" value="HesB-like domain"/>
    <property type="match status" value="1"/>
</dbReference>
<dbReference type="PROSITE" id="PS01152">
    <property type="entry name" value="HESB"/>
    <property type="match status" value="1"/>
</dbReference>
<keyword id="KW-0408">Iron</keyword>
<keyword id="KW-0411">Iron-sulfur</keyword>
<keyword id="KW-0479">Metal-binding</keyword>
<organism>
    <name type="scientific">Klebsiella pneumoniae (strain 342)</name>
    <dbReference type="NCBI Taxonomy" id="507522"/>
    <lineage>
        <taxon>Bacteria</taxon>
        <taxon>Pseudomonadati</taxon>
        <taxon>Pseudomonadota</taxon>
        <taxon>Gammaproteobacteria</taxon>
        <taxon>Enterobacterales</taxon>
        <taxon>Enterobacteriaceae</taxon>
        <taxon>Klebsiella/Raoultella group</taxon>
        <taxon>Klebsiella</taxon>
        <taxon>Klebsiella pneumoniae complex</taxon>
    </lineage>
</organism>
<reference key="1">
    <citation type="journal article" date="2008" name="PLoS Genet.">
        <title>Complete genome sequence of the N2-fixing broad host range endophyte Klebsiella pneumoniae 342 and virulence predictions verified in mice.</title>
        <authorList>
            <person name="Fouts D.E."/>
            <person name="Tyler H.L."/>
            <person name="DeBoy R.T."/>
            <person name="Daugherty S."/>
            <person name="Ren Q."/>
            <person name="Badger J.H."/>
            <person name="Durkin A.S."/>
            <person name="Huot H."/>
            <person name="Shrivastava S."/>
            <person name="Kothari S."/>
            <person name="Dodson R.J."/>
            <person name="Mohamoud Y."/>
            <person name="Khouri H."/>
            <person name="Roesch L.F.W."/>
            <person name="Krogfelt K.A."/>
            <person name="Struve C."/>
            <person name="Triplett E.W."/>
            <person name="Methe B.A."/>
        </authorList>
    </citation>
    <scope>NUCLEOTIDE SEQUENCE [LARGE SCALE GENOMIC DNA]</scope>
    <source>
        <strain>342</strain>
    </source>
</reference>
<accession>B5Y1L3</accession>
<sequence>MSDDVALPLEFTEAAANKVKHLIADEDNPNLKLRVYITGGGCSGFQYGFTFDDQVNEGDMTIEKQGVGLVVDPMSLQYLVGGAVDYTEGLEGSRFIVTNPNAKSTCGCGSSFSV</sequence>
<comment type="function">
    <text evidence="1">Required for insertion of 4Fe-4S clusters for at least IspG.</text>
</comment>
<comment type="cofactor">
    <cofactor evidence="1">
        <name>iron-sulfur cluster</name>
        <dbReference type="ChEBI" id="CHEBI:30408"/>
    </cofactor>
    <text evidence="1">Binds 1 iron-sulfur cluster per subunit.</text>
</comment>
<comment type="subunit">
    <text evidence="1">Homodimer.</text>
</comment>
<comment type="similarity">
    <text evidence="1">Belongs to the HesB/IscA family.</text>
</comment>
<gene>
    <name evidence="1" type="primary">erpA</name>
    <name type="ordered locus">KPK_4562</name>
</gene>